<keyword id="KW-0963">Cytoplasm</keyword>
<keyword id="KW-0227">DNA damage</keyword>
<keyword id="KW-0233">DNA recombination</keyword>
<keyword id="KW-0234">DNA repair</keyword>
<keyword id="KW-0238">DNA-binding</keyword>
<protein>
    <recommendedName>
        <fullName evidence="1">Holliday junction branch migration complex subunit RuvA</fullName>
    </recommendedName>
</protein>
<name>RUVA_STRP4</name>
<feature type="chain" id="PRO_1000090375" description="Holliday junction branch migration complex subunit RuvA">
    <location>
        <begin position="1"/>
        <end position="197"/>
    </location>
</feature>
<feature type="region of interest" description="Domain I" evidence="1">
    <location>
        <begin position="1"/>
        <end position="63"/>
    </location>
</feature>
<feature type="region of interest" description="Domain II" evidence="1">
    <location>
        <begin position="64"/>
        <end position="142"/>
    </location>
</feature>
<feature type="region of interest" description="Flexible linker" evidence="1">
    <location>
        <begin position="143"/>
        <end position="147"/>
    </location>
</feature>
<feature type="region of interest" description="Domain III" evidence="1">
    <location>
        <begin position="148"/>
        <end position="197"/>
    </location>
</feature>
<accession>B5E6D0</accession>
<comment type="function">
    <text evidence="1">The RuvA-RuvB-RuvC complex processes Holliday junction (HJ) DNA during genetic recombination and DNA repair, while the RuvA-RuvB complex plays an important role in the rescue of blocked DNA replication forks via replication fork reversal (RFR). RuvA specifically binds to HJ cruciform DNA, conferring on it an open structure. The RuvB hexamer acts as an ATP-dependent pump, pulling dsDNA into and through the RuvAB complex. HJ branch migration allows RuvC to scan DNA until it finds its consensus sequence, where it cleaves and resolves the cruciform DNA.</text>
</comment>
<comment type="subunit">
    <text evidence="1">Homotetramer. Forms an RuvA(8)-RuvB(12)-Holliday junction (HJ) complex. HJ DNA is sandwiched between 2 RuvA tetramers; dsDNA enters through RuvA and exits via RuvB. An RuvB hexamer assembles on each DNA strand where it exits the tetramer. Each RuvB hexamer is contacted by two RuvA subunits (via domain III) on 2 adjacent RuvB subunits; this complex drives branch migration. In the full resolvosome a probable DNA-RuvA(4)-RuvB(12)-RuvC(2) complex forms which resolves the HJ.</text>
</comment>
<comment type="subcellular location">
    <subcellularLocation>
        <location evidence="1">Cytoplasm</location>
    </subcellularLocation>
</comment>
<comment type="domain">
    <text evidence="1">Has three domains with a flexible linker between the domains II and III and assumes an 'L' shape. Domain III is highly mobile and contacts RuvB.</text>
</comment>
<comment type="similarity">
    <text evidence="1">Belongs to the RuvA family.</text>
</comment>
<evidence type="ECO:0000255" key="1">
    <source>
        <dbReference type="HAMAP-Rule" id="MF_00031"/>
    </source>
</evidence>
<proteinExistence type="inferred from homology"/>
<sequence>MYAYLKGIITKITAKYIVLETNGIGYILHVANPYAYSGQVNQEDQIYVHQVVREDAHLLYGFRSEDEKKLFLSLISVSGIGPVSALAIIAADDNAGLVQAIETKNITYLTKFPKIGKKTAQQMVLDLEGKVVVAGDDLPAKVAVQASAENQELEEAMEAMLALGYKATELKKIKKFFEGTTDTAENYIKSALKMLVK</sequence>
<gene>
    <name evidence="1" type="primary">ruvA</name>
    <name type="ordered locus">SPG_0170</name>
</gene>
<reference key="1">
    <citation type="journal article" date="2001" name="Microb. Drug Resist.">
        <title>Annotated draft genomic sequence from a Streptococcus pneumoniae type 19F clinical isolate.</title>
        <authorList>
            <person name="Dopazo J."/>
            <person name="Mendoza A."/>
            <person name="Herrero J."/>
            <person name="Caldara F."/>
            <person name="Humbert Y."/>
            <person name="Friedli L."/>
            <person name="Guerrier M."/>
            <person name="Grand-Schenk E."/>
            <person name="Gandin C."/>
            <person name="de Francesco M."/>
            <person name="Polissi A."/>
            <person name="Buell G."/>
            <person name="Feger G."/>
            <person name="Garcia E."/>
            <person name="Peitsch M."/>
            <person name="Garcia-Bustos J.F."/>
        </authorList>
    </citation>
    <scope>NUCLEOTIDE SEQUENCE [LARGE SCALE GENOMIC DNA]</scope>
    <source>
        <strain>G54</strain>
    </source>
</reference>
<reference key="2">
    <citation type="submission" date="2008-03" db="EMBL/GenBank/DDBJ databases">
        <title>Pneumococcal beta glucoside metabolism investigated by whole genome comparison.</title>
        <authorList>
            <person name="Mulas L."/>
            <person name="Trappetti C."/>
            <person name="Hakenbeck R."/>
            <person name="Iannelli F."/>
            <person name="Pozzi G."/>
            <person name="Davidsen T.M."/>
            <person name="Tettelin H."/>
            <person name="Oggioni M."/>
        </authorList>
    </citation>
    <scope>NUCLEOTIDE SEQUENCE [LARGE SCALE GENOMIC DNA]</scope>
    <source>
        <strain>G54</strain>
    </source>
</reference>
<organism>
    <name type="scientific">Streptococcus pneumoniae serotype 19F (strain G54)</name>
    <dbReference type="NCBI Taxonomy" id="512566"/>
    <lineage>
        <taxon>Bacteria</taxon>
        <taxon>Bacillati</taxon>
        <taxon>Bacillota</taxon>
        <taxon>Bacilli</taxon>
        <taxon>Lactobacillales</taxon>
        <taxon>Streptococcaceae</taxon>
        <taxon>Streptococcus</taxon>
    </lineage>
</organism>
<dbReference type="EMBL" id="CP001015">
    <property type="protein sequence ID" value="ACF55190.1"/>
    <property type="molecule type" value="Genomic_DNA"/>
</dbReference>
<dbReference type="SMR" id="B5E6D0"/>
<dbReference type="KEGG" id="spx:SPG_0170"/>
<dbReference type="HOGENOM" id="CLU_087936_1_0_9"/>
<dbReference type="GO" id="GO:0005737">
    <property type="term" value="C:cytoplasm"/>
    <property type="evidence" value="ECO:0007669"/>
    <property type="project" value="UniProtKB-SubCell"/>
</dbReference>
<dbReference type="GO" id="GO:0009379">
    <property type="term" value="C:Holliday junction helicase complex"/>
    <property type="evidence" value="ECO:0007669"/>
    <property type="project" value="InterPro"/>
</dbReference>
<dbReference type="GO" id="GO:0048476">
    <property type="term" value="C:Holliday junction resolvase complex"/>
    <property type="evidence" value="ECO:0007669"/>
    <property type="project" value="UniProtKB-UniRule"/>
</dbReference>
<dbReference type="GO" id="GO:0005524">
    <property type="term" value="F:ATP binding"/>
    <property type="evidence" value="ECO:0007669"/>
    <property type="project" value="InterPro"/>
</dbReference>
<dbReference type="GO" id="GO:0000400">
    <property type="term" value="F:four-way junction DNA binding"/>
    <property type="evidence" value="ECO:0007669"/>
    <property type="project" value="UniProtKB-UniRule"/>
</dbReference>
<dbReference type="GO" id="GO:0009378">
    <property type="term" value="F:four-way junction helicase activity"/>
    <property type="evidence" value="ECO:0007669"/>
    <property type="project" value="InterPro"/>
</dbReference>
<dbReference type="GO" id="GO:0006310">
    <property type="term" value="P:DNA recombination"/>
    <property type="evidence" value="ECO:0007669"/>
    <property type="project" value="UniProtKB-UniRule"/>
</dbReference>
<dbReference type="GO" id="GO:0006281">
    <property type="term" value="P:DNA repair"/>
    <property type="evidence" value="ECO:0007669"/>
    <property type="project" value="UniProtKB-UniRule"/>
</dbReference>
<dbReference type="CDD" id="cd14332">
    <property type="entry name" value="UBA_RuvA_C"/>
    <property type="match status" value="1"/>
</dbReference>
<dbReference type="Gene3D" id="1.10.150.20">
    <property type="entry name" value="5' to 3' exonuclease, C-terminal subdomain"/>
    <property type="match status" value="1"/>
</dbReference>
<dbReference type="Gene3D" id="1.10.8.10">
    <property type="entry name" value="DNA helicase RuvA subunit, C-terminal domain"/>
    <property type="match status" value="1"/>
</dbReference>
<dbReference type="Gene3D" id="2.40.50.140">
    <property type="entry name" value="Nucleic acid-binding proteins"/>
    <property type="match status" value="1"/>
</dbReference>
<dbReference type="HAMAP" id="MF_00031">
    <property type="entry name" value="DNA_HJ_migration_RuvA"/>
    <property type="match status" value="1"/>
</dbReference>
<dbReference type="InterPro" id="IPR013849">
    <property type="entry name" value="DNA_helicase_Holl-junc_RuvA_I"/>
</dbReference>
<dbReference type="InterPro" id="IPR003583">
    <property type="entry name" value="Hlx-hairpin-Hlx_DNA-bd_motif"/>
</dbReference>
<dbReference type="InterPro" id="IPR012340">
    <property type="entry name" value="NA-bd_OB-fold"/>
</dbReference>
<dbReference type="InterPro" id="IPR000085">
    <property type="entry name" value="RuvA"/>
</dbReference>
<dbReference type="InterPro" id="IPR010994">
    <property type="entry name" value="RuvA_2-like"/>
</dbReference>
<dbReference type="InterPro" id="IPR011114">
    <property type="entry name" value="RuvA_C"/>
</dbReference>
<dbReference type="InterPro" id="IPR036267">
    <property type="entry name" value="RuvA_C_sf"/>
</dbReference>
<dbReference type="NCBIfam" id="TIGR00084">
    <property type="entry name" value="ruvA"/>
    <property type="match status" value="1"/>
</dbReference>
<dbReference type="Pfam" id="PF14520">
    <property type="entry name" value="HHH_5"/>
    <property type="match status" value="1"/>
</dbReference>
<dbReference type="Pfam" id="PF07499">
    <property type="entry name" value="RuvA_C"/>
    <property type="match status" value="1"/>
</dbReference>
<dbReference type="Pfam" id="PF01330">
    <property type="entry name" value="RuvA_N"/>
    <property type="match status" value="1"/>
</dbReference>
<dbReference type="SMART" id="SM00278">
    <property type="entry name" value="HhH1"/>
    <property type="match status" value="2"/>
</dbReference>
<dbReference type="SUPFAM" id="SSF46929">
    <property type="entry name" value="DNA helicase RuvA subunit, C-terminal domain"/>
    <property type="match status" value="1"/>
</dbReference>
<dbReference type="SUPFAM" id="SSF50249">
    <property type="entry name" value="Nucleic acid-binding proteins"/>
    <property type="match status" value="1"/>
</dbReference>
<dbReference type="SUPFAM" id="SSF47781">
    <property type="entry name" value="RuvA domain 2-like"/>
    <property type="match status" value="1"/>
</dbReference>